<dbReference type="EC" id="4.3.2.7" evidence="2"/>
<dbReference type="EMBL" id="BC122644">
    <property type="protein sequence ID" value="AAI22645.1"/>
    <property type="molecule type" value="mRNA"/>
</dbReference>
<dbReference type="RefSeq" id="NP_001068996.1">
    <property type="nucleotide sequence ID" value="NM_001075528.1"/>
</dbReference>
<dbReference type="SMR" id="Q0IIH4"/>
<dbReference type="FunCoup" id="Q0IIH4">
    <property type="interactions" value="1247"/>
</dbReference>
<dbReference type="STRING" id="9913.ENSBTAP00000025922"/>
<dbReference type="PaxDb" id="9913-ENSBTAP00000025922"/>
<dbReference type="GeneID" id="511605"/>
<dbReference type="KEGG" id="bta:511605"/>
<dbReference type="CTD" id="494143"/>
<dbReference type="VEuPathDB" id="HostDB:ENSBTAG00000019459"/>
<dbReference type="eggNOG" id="KOG3182">
    <property type="taxonomic scope" value="Eukaryota"/>
</dbReference>
<dbReference type="HOGENOM" id="CLU_070703_2_2_1"/>
<dbReference type="InParanoid" id="Q0IIH4"/>
<dbReference type="OMA" id="DHREKDG"/>
<dbReference type="OrthoDB" id="1933483at2759"/>
<dbReference type="TreeFam" id="TF313048"/>
<dbReference type="Reactome" id="R-BTA-174403">
    <property type="pathway name" value="Glutathione synthesis and recycling"/>
</dbReference>
<dbReference type="Proteomes" id="UP000009136">
    <property type="component" value="Chromosome 11"/>
</dbReference>
<dbReference type="Bgee" id="ENSBTAG00000019459">
    <property type="expression patterns" value="Expressed in semitendinosus and 105 other cell types or tissues"/>
</dbReference>
<dbReference type="GO" id="GO:0005737">
    <property type="term" value="C:cytoplasm"/>
    <property type="evidence" value="ECO:0000318"/>
    <property type="project" value="GO_Central"/>
</dbReference>
<dbReference type="GO" id="GO:0005829">
    <property type="term" value="C:cytosol"/>
    <property type="evidence" value="ECO:0007669"/>
    <property type="project" value="UniProtKB-SubCell"/>
</dbReference>
<dbReference type="GO" id="GO:0061928">
    <property type="term" value="F:glutathione specific gamma-glutamylcyclotransferase activity"/>
    <property type="evidence" value="ECO:0000318"/>
    <property type="project" value="GO_Central"/>
</dbReference>
<dbReference type="GO" id="GO:0006751">
    <property type="term" value="P:glutathione catabolic process"/>
    <property type="evidence" value="ECO:0000318"/>
    <property type="project" value="GO_Central"/>
</dbReference>
<dbReference type="CDD" id="cd06661">
    <property type="entry name" value="GGCT_like"/>
    <property type="match status" value="1"/>
</dbReference>
<dbReference type="FunFam" id="3.10.490.10:FF:000003">
    <property type="entry name" value="Gamma-glutamylcyclotransferase"/>
    <property type="match status" value="1"/>
</dbReference>
<dbReference type="Gene3D" id="3.10.490.10">
    <property type="entry name" value="Gamma-glutamyl cyclotransferase-like"/>
    <property type="match status" value="1"/>
</dbReference>
<dbReference type="InterPro" id="IPR006840">
    <property type="entry name" value="ChaC"/>
</dbReference>
<dbReference type="InterPro" id="IPR013024">
    <property type="entry name" value="GGCT-like"/>
</dbReference>
<dbReference type="InterPro" id="IPR036568">
    <property type="entry name" value="GGCT-like_sf"/>
</dbReference>
<dbReference type="PANTHER" id="PTHR12192">
    <property type="entry name" value="CATION TRANSPORT PROTEIN CHAC-RELATED"/>
    <property type="match status" value="1"/>
</dbReference>
<dbReference type="PANTHER" id="PTHR12192:SF2">
    <property type="entry name" value="GLUTATHIONE-SPECIFIC GAMMA-GLUTAMYLCYCLOTRANSFERASE 2"/>
    <property type="match status" value="1"/>
</dbReference>
<dbReference type="Pfam" id="PF04752">
    <property type="entry name" value="ChaC"/>
    <property type="match status" value="1"/>
</dbReference>
<dbReference type="SUPFAM" id="SSF110857">
    <property type="entry name" value="Gamma-glutamyl cyclotransferase-like"/>
    <property type="match status" value="1"/>
</dbReference>
<name>CHAC2_BOVIN</name>
<gene>
    <name evidence="2" type="primary">CHAC2</name>
</gene>
<feature type="chain" id="PRO_0000314911" description="Putative glutathione-specific gamma-glutamylcyclotransferase 2">
    <location>
        <begin position="1"/>
        <end position="176"/>
    </location>
</feature>
<feature type="active site" description="Proton acceptor" evidence="1">
    <location>
        <position position="71"/>
    </location>
</feature>
<feature type="binding site" evidence="1">
    <location>
        <begin position="3"/>
        <end position="8"/>
    </location>
    <ligand>
        <name>substrate</name>
    </ligand>
</feature>
<keyword id="KW-0963">Cytoplasm</keyword>
<keyword id="KW-0456">Lyase</keyword>
<keyword id="KW-1185">Reference proteome</keyword>
<organism>
    <name type="scientific">Bos taurus</name>
    <name type="common">Bovine</name>
    <dbReference type="NCBI Taxonomy" id="9913"/>
    <lineage>
        <taxon>Eukaryota</taxon>
        <taxon>Metazoa</taxon>
        <taxon>Chordata</taxon>
        <taxon>Craniata</taxon>
        <taxon>Vertebrata</taxon>
        <taxon>Euteleostomi</taxon>
        <taxon>Mammalia</taxon>
        <taxon>Eutheria</taxon>
        <taxon>Laurasiatheria</taxon>
        <taxon>Artiodactyla</taxon>
        <taxon>Ruminantia</taxon>
        <taxon>Pecora</taxon>
        <taxon>Bovidae</taxon>
        <taxon>Bovinae</taxon>
        <taxon>Bos</taxon>
    </lineage>
</organism>
<proteinExistence type="evidence at transcript level"/>
<comment type="function">
    <text evidence="2">Catalyzes the cleavage of glutathione into 5-oxo-L-proline and a Cys-Gly dipeptide. Acts specifically on glutathione, but not on other gamma-glutamyl peptides.</text>
</comment>
<comment type="catalytic activity">
    <reaction evidence="2">
        <text>glutathione = L-cysteinylglycine + 5-oxo-L-proline</text>
        <dbReference type="Rhea" id="RHEA:47724"/>
        <dbReference type="ChEBI" id="CHEBI:57925"/>
        <dbReference type="ChEBI" id="CHEBI:58402"/>
        <dbReference type="ChEBI" id="CHEBI:61694"/>
        <dbReference type="EC" id="4.3.2.7"/>
    </reaction>
</comment>
<comment type="subunit">
    <text evidence="2">Monomer.</text>
</comment>
<comment type="subcellular location">
    <subcellularLocation>
        <location evidence="2">Cytoplasm</location>
        <location evidence="2">Cytosol</location>
    </subcellularLocation>
</comment>
<comment type="similarity">
    <text evidence="4">Belongs to the gamma-glutamylcyclotransferase family. ChaC subfamily.</text>
</comment>
<reference key="1">
    <citation type="submission" date="2006-08" db="EMBL/GenBank/DDBJ databases">
        <authorList>
            <consortium name="NIH - Mammalian Gene Collection (MGC) project"/>
        </authorList>
    </citation>
    <scope>NUCLEOTIDE SEQUENCE [LARGE SCALE MRNA]</scope>
    <source>
        <strain>Hereford</strain>
        <tissue>Basal ganglia</tissue>
    </source>
</reference>
<protein>
    <recommendedName>
        <fullName evidence="2">Putative glutathione-specific gamma-glutamylcyclotransferase 2</fullName>
        <shortName evidence="2">Gamma-GCG 2</shortName>
        <ecNumber evidence="2">4.3.2.7</ecNumber>
    </recommendedName>
    <alternativeName>
        <fullName evidence="3">Cation transport regulator-like protein 2</fullName>
    </alternativeName>
</protein>
<sequence>MWVFGYGSLIWKVDFPYQDKLVGYISGYSRRFWQGSTDHRGVPGKGSVWGVAYKLPVGKEEEVKAYLDFREKGGYRTTTVIFYPKDSTTEPFSVLLYIGTRDNPNYLGPAPLEDIAEQIFNAAGPSGKNTEYLFELANSMRSLVPEDADEHLFSLEKLVKERLEGKQNFNCIKRPN</sequence>
<evidence type="ECO:0000250" key="1">
    <source>
        <dbReference type="UniProtKB" id="O75223"/>
    </source>
</evidence>
<evidence type="ECO:0000250" key="2">
    <source>
        <dbReference type="UniProtKB" id="Q8WUX2"/>
    </source>
</evidence>
<evidence type="ECO:0000250" key="3">
    <source>
        <dbReference type="UniProtKB" id="Q9BUX1"/>
    </source>
</evidence>
<evidence type="ECO:0000305" key="4"/>
<accession>Q0IIH4</accession>